<comment type="catalytic activity">
    <reaction evidence="1">
        <text>a plastoquinone + NADH + (n+1) H(+)(in) = a plastoquinol + NAD(+) + n H(+)(out)</text>
        <dbReference type="Rhea" id="RHEA:42608"/>
        <dbReference type="Rhea" id="RHEA-COMP:9561"/>
        <dbReference type="Rhea" id="RHEA-COMP:9562"/>
        <dbReference type="ChEBI" id="CHEBI:15378"/>
        <dbReference type="ChEBI" id="CHEBI:17757"/>
        <dbReference type="ChEBI" id="CHEBI:57540"/>
        <dbReference type="ChEBI" id="CHEBI:57945"/>
        <dbReference type="ChEBI" id="CHEBI:62192"/>
    </reaction>
</comment>
<comment type="catalytic activity">
    <reaction evidence="1">
        <text>a plastoquinone + NADPH + (n+1) H(+)(in) = a plastoquinol + NADP(+) + n H(+)(out)</text>
        <dbReference type="Rhea" id="RHEA:42612"/>
        <dbReference type="Rhea" id="RHEA-COMP:9561"/>
        <dbReference type="Rhea" id="RHEA-COMP:9562"/>
        <dbReference type="ChEBI" id="CHEBI:15378"/>
        <dbReference type="ChEBI" id="CHEBI:17757"/>
        <dbReference type="ChEBI" id="CHEBI:57783"/>
        <dbReference type="ChEBI" id="CHEBI:58349"/>
        <dbReference type="ChEBI" id="CHEBI:62192"/>
    </reaction>
</comment>
<comment type="subcellular location">
    <subcellularLocation>
        <location evidence="1">Plastid</location>
        <location evidence="1">Chloroplast thylakoid membrane</location>
        <topology evidence="1">Multi-pass membrane protein</topology>
    </subcellularLocation>
</comment>
<comment type="similarity">
    <text evidence="1">Belongs to the complex I subunit 4 family.</text>
</comment>
<sequence>MTSYFPWLTIIVVLPIFAASSIFFLPHKGNKVFRWYTTCICLTELLLTTYVFCYHFQLDDQLIQLEEDLKCINIFDFHWRLGIDGLSIGPILLTGFITTLATLAAWPVTRNSRLFYLLMLVMYSGQIGLFSSRDLLLFFIMWELELIPVYLLLSMWGGKKRLYSATKFILYTAGGSVFLLIGVLGMGLYGSNEPTLDFERLANQSYPVALEIIFYFGFLIAYAVKSPIIPLHTWLPDTHGEAHYSTCMLLAGILLKMGAYGLIRINMELLPHAHSLFSPWLVIVGTIQIIYAASTSFGQRNLKKRIACSSVSHMGFIIIGIGSITDTGLNGAILQILSHGFIGAALFFLSGTSCDRIRFVYLDEMGGISLPMPKIFTMFSSFSMASLALPGMSGFVAELVVFLGIITSPKYLLMPKILITFVMAIGMILTPIYLLSMSRQMFYGYKLFNVPNSFFVDSGPRELFVSICIFLPVIGIGIYPDCVFSLSVDKIEGILSNYFHR</sequence>
<gene>
    <name evidence="1" type="primary">ndhD</name>
</gene>
<reference key="1">
    <citation type="journal article" date="2007" name="Mol. Phylogenet. Evol.">
        <title>Phylogenetic and evolutionary implications of complete chloroplast genome sequences of four early-diverging angiosperms: Buxus (Buxaceae), Chloranthus (Chloranthaceae), Dioscorea (Dioscoreaceae), and Illicium (Schisandraceae).</title>
        <authorList>
            <person name="Hansen D.R."/>
            <person name="Dastidar S.G."/>
            <person name="Cai Z."/>
            <person name="Penaflor C."/>
            <person name="Kuehl J.V."/>
            <person name="Boore J.L."/>
            <person name="Jansen R.K."/>
        </authorList>
    </citation>
    <scope>NUCLEOTIDE SEQUENCE [LARGE SCALE GENOMIC DNA]</scope>
</reference>
<keyword id="KW-0150">Chloroplast</keyword>
<keyword id="KW-0472">Membrane</keyword>
<keyword id="KW-0520">NAD</keyword>
<keyword id="KW-0521">NADP</keyword>
<keyword id="KW-0934">Plastid</keyword>
<keyword id="KW-0618">Plastoquinone</keyword>
<keyword id="KW-0874">Quinone</keyword>
<keyword id="KW-0793">Thylakoid</keyword>
<keyword id="KW-1278">Translocase</keyword>
<keyword id="KW-0812">Transmembrane</keyword>
<keyword id="KW-1133">Transmembrane helix</keyword>
<protein>
    <recommendedName>
        <fullName evidence="1">NAD(P)H-quinone oxidoreductase chain 4, chloroplastic</fullName>
        <ecNumber evidence="1">7.1.1.-</ecNumber>
    </recommendedName>
    <alternativeName>
        <fullName evidence="1">NAD(P)H dehydrogenase, chain 4</fullName>
    </alternativeName>
    <alternativeName>
        <fullName evidence="1">NADH-plastoquinone oxidoreductase chain 4</fullName>
    </alternativeName>
</protein>
<feature type="chain" id="PRO_0000343283" description="NAD(P)H-quinone oxidoreductase chain 4, chloroplastic">
    <location>
        <begin position="1"/>
        <end position="501"/>
    </location>
</feature>
<feature type="transmembrane region" description="Helical" evidence="1">
    <location>
        <begin position="5"/>
        <end position="25"/>
    </location>
</feature>
<feature type="transmembrane region" description="Helical" evidence="1">
    <location>
        <begin position="38"/>
        <end position="58"/>
    </location>
</feature>
<feature type="transmembrane region" description="Helical" evidence="1">
    <location>
        <begin position="88"/>
        <end position="108"/>
    </location>
</feature>
<feature type="transmembrane region" description="Helical" evidence="1">
    <location>
        <begin position="114"/>
        <end position="131"/>
    </location>
</feature>
<feature type="transmembrane region" description="Helical" evidence="1">
    <location>
        <begin position="135"/>
        <end position="155"/>
    </location>
</feature>
<feature type="transmembrane region" description="Helical" evidence="1">
    <location>
        <begin position="168"/>
        <end position="188"/>
    </location>
</feature>
<feature type="transmembrane region" description="Helical" evidence="1">
    <location>
        <begin position="209"/>
        <end position="229"/>
    </location>
</feature>
<feature type="transmembrane region" description="Helical" evidence="1">
    <location>
        <begin position="243"/>
        <end position="263"/>
    </location>
</feature>
<feature type="transmembrane region" description="Helical" evidence="1">
    <location>
        <begin position="273"/>
        <end position="293"/>
    </location>
</feature>
<feature type="transmembrane region" description="Helical" evidence="1">
    <location>
        <begin position="306"/>
        <end position="326"/>
    </location>
</feature>
<feature type="transmembrane region" description="Helical" evidence="1">
    <location>
        <begin position="331"/>
        <end position="351"/>
    </location>
</feature>
<feature type="transmembrane region" description="Helical" evidence="1">
    <location>
        <begin position="387"/>
        <end position="407"/>
    </location>
</feature>
<feature type="transmembrane region" description="Helical" evidence="1">
    <location>
        <begin position="417"/>
        <end position="437"/>
    </location>
</feature>
<feature type="transmembrane region" description="Helical" evidence="1">
    <location>
        <begin position="464"/>
        <end position="484"/>
    </location>
</feature>
<evidence type="ECO:0000255" key="1">
    <source>
        <dbReference type="HAMAP-Rule" id="MF_00491"/>
    </source>
</evidence>
<accession>A6MMR3</accession>
<name>NU4C_DIOEL</name>
<proteinExistence type="inferred from homology"/>
<dbReference type="EC" id="7.1.1.-" evidence="1"/>
<dbReference type="EMBL" id="EF380353">
    <property type="protein sequence ID" value="ABR01485.1"/>
    <property type="molecule type" value="Genomic_DNA"/>
</dbReference>
<dbReference type="RefSeq" id="YP_001294408.2">
    <property type="nucleotide sequence ID" value="NC_009601.1"/>
</dbReference>
<dbReference type="SMR" id="A6MMR3"/>
<dbReference type="GeneID" id="5236656"/>
<dbReference type="GO" id="GO:0009535">
    <property type="term" value="C:chloroplast thylakoid membrane"/>
    <property type="evidence" value="ECO:0007669"/>
    <property type="project" value="UniProtKB-SubCell"/>
</dbReference>
<dbReference type="GO" id="GO:0008137">
    <property type="term" value="F:NADH dehydrogenase (ubiquinone) activity"/>
    <property type="evidence" value="ECO:0007669"/>
    <property type="project" value="InterPro"/>
</dbReference>
<dbReference type="GO" id="GO:0048039">
    <property type="term" value="F:ubiquinone binding"/>
    <property type="evidence" value="ECO:0007669"/>
    <property type="project" value="TreeGrafter"/>
</dbReference>
<dbReference type="GO" id="GO:0042773">
    <property type="term" value="P:ATP synthesis coupled electron transport"/>
    <property type="evidence" value="ECO:0007669"/>
    <property type="project" value="InterPro"/>
</dbReference>
<dbReference type="GO" id="GO:0015990">
    <property type="term" value="P:electron transport coupled proton transport"/>
    <property type="evidence" value="ECO:0007669"/>
    <property type="project" value="TreeGrafter"/>
</dbReference>
<dbReference type="HAMAP" id="MF_00491">
    <property type="entry name" value="NDH1_NuoM"/>
    <property type="match status" value="1"/>
</dbReference>
<dbReference type="InterPro" id="IPR022997">
    <property type="entry name" value="NADH_Q_OxRdtase_chain4"/>
</dbReference>
<dbReference type="InterPro" id="IPR010227">
    <property type="entry name" value="NADH_Q_OxRdtase_chainM/4"/>
</dbReference>
<dbReference type="InterPro" id="IPR003918">
    <property type="entry name" value="NADH_UbQ_OxRdtase"/>
</dbReference>
<dbReference type="InterPro" id="IPR001750">
    <property type="entry name" value="ND/Mrp_TM"/>
</dbReference>
<dbReference type="NCBIfam" id="TIGR01972">
    <property type="entry name" value="NDH_I_M"/>
    <property type="match status" value="1"/>
</dbReference>
<dbReference type="PANTHER" id="PTHR43507:SF21">
    <property type="entry name" value="NAD(P)H-QUINONE OXIDOREDUCTASE CHAIN 4, CHLOROPLASTIC"/>
    <property type="match status" value="1"/>
</dbReference>
<dbReference type="PANTHER" id="PTHR43507">
    <property type="entry name" value="NADH-UBIQUINONE OXIDOREDUCTASE CHAIN 4"/>
    <property type="match status" value="1"/>
</dbReference>
<dbReference type="Pfam" id="PF00361">
    <property type="entry name" value="Proton_antipo_M"/>
    <property type="match status" value="1"/>
</dbReference>
<dbReference type="PRINTS" id="PR01437">
    <property type="entry name" value="NUOXDRDTASE4"/>
</dbReference>
<organism>
    <name type="scientific">Dioscorea elephantipes</name>
    <name type="common">Elephant's foot yam</name>
    <name type="synonym">Testudinaria elephantipes</name>
    <dbReference type="NCBI Taxonomy" id="145284"/>
    <lineage>
        <taxon>Eukaryota</taxon>
        <taxon>Viridiplantae</taxon>
        <taxon>Streptophyta</taxon>
        <taxon>Embryophyta</taxon>
        <taxon>Tracheophyta</taxon>
        <taxon>Spermatophyta</taxon>
        <taxon>Magnoliopsida</taxon>
        <taxon>Liliopsida</taxon>
        <taxon>Dioscoreales</taxon>
        <taxon>Dioscoreaceae</taxon>
        <taxon>Dioscorea</taxon>
    </lineage>
</organism>
<geneLocation type="chloroplast"/>